<keyword id="KW-0067">ATP-binding</keyword>
<keyword id="KW-0414">Isoprene biosynthesis</keyword>
<keyword id="KW-0418">Kinase</keyword>
<keyword id="KW-0547">Nucleotide-binding</keyword>
<keyword id="KW-0808">Transferase</keyword>
<accession>B7MTZ2</accession>
<comment type="function">
    <text evidence="1">Catalyzes the phosphorylation of the position 2 hydroxy group of 4-diphosphocytidyl-2C-methyl-D-erythritol.</text>
</comment>
<comment type="catalytic activity">
    <reaction evidence="1">
        <text>4-CDP-2-C-methyl-D-erythritol + ATP = 4-CDP-2-C-methyl-D-erythritol 2-phosphate + ADP + H(+)</text>
        <dbReference type="Rhea" id="RHEA:18437"/>
        <dbReference type="ChEBI" id="CHEBI:15378"/>
        <dbReference type="ChEBI" id="CHEBI:30616"/>
        <dbReference type="ChEBI" id="CHEBI:57823"/>
        <dbReference type="ChEBI" id="CHEBI:57919"/>
        <dbReference type="ChEBI" id="CHEBI:456216"/>
        <dbReference type="EC" id="2.7.1.148"/>
    </reaction>
</comment>
<comment type="pathway">
    <text evidence="1">Isoprenoid biosynthesis; isopentenyl diphosphate biosynthesis via DXP pathway; isopentenyl diphosphate from 1-deoxy-D-xylulose 5-phosphate: step 3/6.</text>
</comment>
<comment type="subunit">
    <text evidence="1">Homodimer.</text>
</comment>
<comment type="similarity">
    <text evidence="1">Belongs to the GHMP kinase family. IspE subfamily.</text>
</comment>
<dbReference type="EC" id="2.7.1.148" evidence="1"/>
<dbReference type="EMBL" id="CU928162">
    <property type="protein sequence ID" value="CAR07556.1"/>
    <property type="molecule type" value="Genomic_DNA"/>
</dbReference>
<dbReference type="RefSeq" id="WP_001260346.1">
    <property type="nucleotide sequence ID" value="NC_011745.1"/>
</dbReference>
<dbReference type="SMR" id="B7MTZ2"/>
<dbReference type="KEGG" id="ecq:ECED1_1356"/>
<dbReference type="HOGENOM" id="CLU_053057_3_0_6"/>
<dbReference type="UniPathway" id="UPA00056">
    <property type="reaction ID" value="UER00094"/>
</dbReference>
<dbReference type="Proteomes" id="UP000000748">
    <property type="component" value="Chromosome"/>
</dbReference>
<dbReference type="GO" id="GO:0050515">
    <property type="term" value="F:4-(cytidine 5'-diphospho)-2-C-methyl-D-erythritol kinase activity"/>
    <property type="evidence" value="ECO:0007669"/>
    <property type="project" value="UniProtKB-UniRule"/>
</dbReference>
<dbReference type="GO" id="GO:0005524">
    <property type="term" value="F:ATP binding"/>
    <property type="evidence" value="ECO:0007669"/>
    <property type="project" value="UniProtKB-UniRule"/>
</dbReference>
<dbReference type="GO" id="GO:0019288">
    <property type="term" value="P:isopentenyl diphosphate biosynthetic process, methylerythritol 4-phosphate pathway"/>
    <property type="evidence" value="ECO:0007669"/>
    <property type="project" value="UniProtKB-UniRule"/>
</dbReference>
<dbReference type="GO" id="GO:0016114">
    <property type="term" value="P:terpenoid biosynthetic process"/>
    <property type="evidence" value="ECO:0007669"/>
    <property type="project" value="InterPro"/>
</dbReference>
<dbReference type="FunFam" id="3.30.230.10:FF:000022">
    <property type="entry name" value="4-diphosphocytidyl-2-C-methyl-D-erythritol kinase"/>
    <property type="match status" value="1"/>
</dbReference>
<dbReference type="FunFam" id="3.30.70.890:FF:000004">
    <property type="entry name" value="4-diphosphocytidyl-2-C-methyl-D-erythritol kinase"/>
    <property type="match status" value="1"/>
</dbReference>
<dbReference type="Gene3D" id="3.30.230.10">
    <property type="match status" value="1"/>
</dbReference>
<dbReference type="Gene3D" id="3.30.70.890">
    <property type="entry name" value="GHMP kinase, C-terminal domain"/>
    <property type="match status" value="1"/>
</dbReference>
<dbReference type="HAMAP" id="MF_00061">
    <property type="entry name" value="IspE"/>
    <property type="match status" value="1"/>
</dbReference>
<dbReference type="InterPro" id="IPR013750">
    <property type="entry name" value="GHMP_kinase_C_dom"/>
</dbReference>
<dbReference type="InterPro" id="IPR036554">
    <property type="entry name" value="GHMP_kinase_C_sf"/>
</dbReference>
<dbReference type="InterPro" id="IPR006204">
    <property type="entry name" value="GHMP_kinase_N_dom"/>
</dbReference>
<dbReference type="InterPro" id="IPR004424">
    <property type="entry name" value="IspE"/>
</dbReference>
<dbReference type="InterPro" id="IPR020568">
    <property type="entry name" value="Ribosomal_Su5_D2-typ_SF"/>
</dbReference>
<dbReference type="InterPro" id="IPR014721">
    <property type="entry name" value="Ribsml_uS5_D2-typ_fold_subgr"/>
</dbReference>
<dbReference type="NCBIfam" id="TIGR00154">
    <property type="entry name" value="ispE"/>
    <property type="match status" value="1"/>
</dbReference>
<dbReference type="PANTHER" id="PTHR43527">
    <property type="entry name" value="4-DIPHOSPHOCYTIDYL-2-C-METHYL-D-ERYTHRITOL KINASE, CHLOROPLASTIC"/>
    <property type="match status" value="1"/>
</dbReference>
<dbReference type="PANTHER" id="PTHR43527:SF2">
    <property type="entry name" value="4-DIPHOSPHOCYTIDYL-2-C-METHYL-D-ERYTHRITOL KINASE, CHLOROPLASTIC"/>
    <property type="match status" value="1"/>
</dbReference>
<dbReference type="Pfam" id="PF08544">
    <property type="entry name" value="GHMP_kinases_C"/>
    <property type="match status" value="1"/>
</dbReference>
<dbReference type="Pfam" id="PF00288">
    <property type="entry name" value="GHMP_kinases_N"/>
    <property type="match status" value="1"/>
</dbReference>
<dbReference type="PIRSF" id="PIRSF010376">
    <property type="entry name" value="IspE"/>
    <property type="match status" value="1"/>
</dbReference>
<dbReference type="SUPFAM" id="SSF55060">
    <property type="entry name" value="GHMP Kinase, C-terminal domain"/>
    <property type="match status" value="1"/>
</dbReference>
<dbReference type="SUPFAM" id="SSF54211">
    <property type="entry name" value="Ribosomal protein S5 domain 2-like"/>
    <property type="match status" value="1"/>
</dbReference>
<gene>
    <name evidence="1" type="primary">ispE</name>
    <name type="ordered locus">ECED1_1356</name>
</gene>
<reference key="1">
    <citation type="journal article" date="2009" name="PLoS Genet.">
        <title>Organised genome dynamics in the Escherichia coli species results in highly diverse adaptive paths.</title>
        <authorList>
            <person name="Touchon M."/>
            <person name="Hoede C."/>
            <person name="Tenaillon O."/>
            <person name="Barbe V."/>
            <person name="Baeriswyl S."/>
            <person name="Bidet P."/>
            <person name="Bingen E."/>
            <person name="Bonacorsi S."/>
            <person name="Bouchier C."/>
            <person name="Bouvet O."/>
            <person name="Calteau A."/>
            <person name="Chiapello H."/>
            <person name="Clermont O."/>
            <person name="Cruveiller S."/>
            <person name="Danchin A."/>
            <person name="Diard M."/>
            <person name="Dossat C."/>
            <person name="Karoui M.E."/>
            <person name="Frapy E."/>
            <person name="Garry L."/>
            <person name="Ghigo J.M."/>
            <person name="Gilles A.M."/>
            <person name="Johnson J."/>
            <person name="Le Bouguenec C."/>
            <person name="Lescat M."/>
            <person name="Mangenot S."/>
            <person name="Martinez-Jehanne V."/>
            <person name="Matic I."/>
            <person name="Nassif X."/>
            <person name="Oztas S."/>
            <person name="Petit M.A."/>
            <person name="Pichon C."/>
            <person name="Rouy Z."/>
            <person name="Ruf C.S."/>
            <person name="Schneider D."/>
            <person name="Tourret J."/>
            <person name="Vacherie B."/>
            <person name="Vallenet D."/>
            <person name="Medigue C."/>
            <person name="Rocha E.P.C."/>
            <person name="Denamur E."/>
        </authorList>
    </citation>
    <scope>NUCLEOTIDE SEQUENCE [LARGE SCALE GENOMIC DNA]</scope>
    <source>
        <strain>ED1a</strain>
    </source>
</reference>
<evidence type="ECO:0000255" key="1">
    <source>
        <dbReference type="HAMAP-Rule" id="MF_00061"/>
    </source>
</evidence>
<name>ISPE_ECO81</name>
<organism>
    <name type="scientific">Escherichia coli O81 (strain ED1a)</name>
    <dbReference type="NCBI Taxonomy" id="585397"/>
    <lineage>
        <taxon>Bacteria</taxon>
        <taxon>Pseudomonadati</taxon>
        <taxon>Pseudomonadota</taxon>
        <taxon>Gammaproteobacteria</taxon>
        <taxon>Enterobacterales</taxon>
        <taxon>Enterobacteriaceae</taxon>
        <taxon>Escherichia</taxon>
    </lineage>
</organism>
<protein>
    <recommendedName>
        <fullName evidence="1">4-diphosphocytidyl-2-C-methyl-D-erythritol kinase</fullName>
        <shortName evidence="1">CMK</shortName>
        <ecNumber evidence="1">2.7.1.148</ecNumber>
    </recommendedName>
    <alternativeName>
        <fullName evidence="1">4-(cytidine-5'-diphospho)-2-C-methyl-D-erythritol kinase</fullName>
    </alternativeName>
</protein>
<proteinExistence type="inferred from homology"/>
<sequence>MRTQWPSPAKLNLFLYITGQRADGYHTLQTLFQFLDYGDTISIELRDDGDIRLLTPVEGVEHEDNLIVRAARLLMKTAADSGRLSTGSGANISIDKRLPMGGGLGGGSSNAATVLVALNHLWQCGLSMDELAEMGLTLGADVPVFVRGHAAFAEGVGEILTPVDPPEKWYLVAHPGVSIPTPVIFKDPELPRNTPKRSIETLLKCEFSNDCEVIARKRFREVDAVLSWLLEYAPSRLTGTGACVFAEFDTESEARQVLEQAPEWLNGFVAKGVNLSPLHRAML</sequence>
<feature type="chain" id="PRO_1000190688" description="4-diphosphocytidyl-2-C-methyl-D-erythritol kinase">
    <location>
        <begin position="1"/>
        <end position="283"/>
    </location>
</feature>
<feature type="active site" evidence="1">
    <location>
        <position position="10"/>
    </location>
</feature>
<feature type="active site" evidence="1">
    <location>
        <position position="141"/>
    </location>
</feature>
<feature type="binding site" evidence="1">
    <location>
        <begin position="99"/>
        <end position="109"/>
    </location>
    <ligand>
        <name>ATP</name>
        <dbReference type="ChEBI" id="CHEBI:30616"/>
    </ligand>
</feature>